<dbReference type="EC" id="6.3.5.2" evidence="1"/>
<dbReference type="EMBL" id="CP000117">
    <property type="protein sequence ID" value="ABA20678.1"/>
    <property type="molecule type" value="Genomic_DNA"/>
</dbReference>
<dbReference type="SMR" id="Q3MEA8"/>
<dbReference type="STRING" id="240292.Ava_1054"/>
<dbReference type="MEROPS" id="C26.957"/>
<dbReference type="KEGG" id="ava:Ava_1054"/>
<dbReference type="eggNOG" id="COG0518">
    <property type="taxonomic scope" value="Bacteria"/>
</dbReference>
<dbReference type="eggNOG" id="COG0519">
    <property type="taxonomic scope" value="Bacteria"/>
</dbReference>
<dbReference type="HOGENOM" id="CLU_014340_0_5_3"/>
<dbReference type="UniPathway" id="UPA00189">
    <property type="reaction ID" value="UER00296"/>
</dbReference>
<dbReference type="Proteomes" id="UP000002533">
    <property type="component" value="Chromosome"/>
</dbReference>
<dbReference type="GO" id="GO:0005829">
    <property type="term" value="C:cytosol"/>
    <property type="evidence" value="ECO:0007669"/>
    <property type="project" value="TreeGrafter"/>
</dbReference>
<dbReference type="GO" id="GO:0005524">
    <property type="term" value="F:ATP binding"/>
    <property type="evidence" value="ECO:0007669"/>
    <property type="project" value="UniProtKB-UniRule"/>
</dbReference>
<dbReference type="GO" id="GO:0003921">
    <property type="term" value="F:GMP synthase activity"/>
    <property type="evidence" value="ECO:0007669"/>
    <property type="project" value="InterPro"/>
</dbReference>
<dbReference type="CDD" id="cd01742">
    <property type="entry name" value="GATase1_GMP_Synthase"/>
    <property type="match status" value="1"/>
</dbReference>
<dbReference type="CDD" id="cd01997">
    <property type="entry name" value="GMP_synthase_C"/>
    <property type="match status" value="1"/>
</dbReference>
<dbReference type="FunFam" id="3.30.300.10:FF:000002">
    <property type="entry name" value="GMP synthase [glutamine-hydrolyzing]"/>
    <property type="match status" value="1"/>
</dbReference>
<dbReference type="FunFam" id="3.40.50.620:FF:000001">
    <property type="entry name" value="GMP synthase [glutamine-hydrolyzing]"/>
    <property type="match status" value="1"/>
</dbReference>
<dbReference type="FunFam" id="3.40.50.880:FF:000001">
    <property type="entry name" value="GMP synthase [glutamine-hydrolyzing]"/>
    <property type="match status" value="1"/>
</dbReference>
<dbReference type="Gene3D" id="3.30.300.10">
    <property type="match status" value="1"/>
</dbReference>
<dbReference type="Gene3D" id="3.40.50.880">
    <property type="match status" value="1"/>
</dbReference>
<dbReference type="Gene3D" id="3.40.50.620">
    <property type="entry name" value="HUPs"/>
    <property type="match status" value="1"/>
</dbReference>
<dbReference type="HAMAP" id="MF_00344">
    <property type="entry name" value="GMP_synthase"/>
    <property type="match status" value="1"/>
</dbReference>
<dbReference type="InterPro" id="IPR029062">
    <property type="entry name" value="Class_I_gatase-like"/>
</dbReference>
<dbReference type="InterPro" id="IPR017926">
    <property type="entry name" value="GATASE"/>
</dbReference>
<dbReference type="InterPro" id="IPR001674">
    <property type="entry name" value="GMP_synth_C"/>
</dbReference>
<dbReference type="InterPro" id="IPR004739">
    <property type="entry name" value="GMP_synth_GATase"/>
</dbReference>
<dbReference type="InterPro" id="IPR022955">
    <property type="entry name" value="GMP_synthase"/>
</dbReference>
<dbReference type="InterPro" id="IPR025777">
    <property type="entry name" value="GMPS_ATP_PPase_dom"/>
</dbReference>
<dbReference type="InterPro" id="IPR022310">
    <property type="entry name" value="NAD/GMP_synthase"/>
</dbReference>
<dbReference type="InterPro" id="IPR014729">
    <property type="entry name" value="Rossmann-like_a/b/a_fold"/>
</dbReference>
<dbReference type="NCBIfam" id="TIGR00884">
    <property type="entry name" value="guaA_Cterm"/>
    <property type="match status" value="1"/>
</dbReference>
<dbReference type="NCBIfam" id="TIGR00888">
    <property type="entry name" value="guaA_Nterm"/>
    <property type="match status" value="1"/>
</dbReference>
<dbReference type="NCBIfam" id="NF000848">
    <property type="entry name" value="PRK00074.1"/>
    <property type="match status" value="1"/>
</dbReference>
<dbReference type="PANTHER" id="PTHR11922:SF2">
    <property type="entry name" value="GMP SYNTHASE [GLUTAMINE-HYDROLYZING]"/>
    <property type="match status" value="1"/>
</dbReference>
<dbReference type="PANTHER" id="PTHR11922">
    <property type="entry name" value="GMP SYNTHASE-RELATED"/>
    <property type="match status" value="1"/>
</dbReference>
<dbReference type="Pfam" id="PF00117">
    <property type="entry name" value="GATase"/>
    <property type="match status" value="1"/>
</dbReference>
<dbReference type="Pfam" id="PF00958">
    <property type="entry name" value="GMP_synt_C"/>
    <property type="match status" value="1"/>
</dbReference>
<dbReference type="Pfam" id="PF02540">
    <property type="entry name" value="NAD_synthase"/>
    <property type="match status" value="1"/>
</dbReference>
<dbReference type="PRINTS" id="PR00097">
    <property type="entry name" value="ANTSNTHASEII"/>
</dbReference>
<dbReference type="PRINTS" id="PR00099">
    <property type="entry name" value="CPSGATASE"/>
</dbReference>
<dbReference type="PRINTS" id="PR00096">
    <property type="entry name" value="GATASE"/>
</dbReference>
<dbReference type="SUPFAM" id="SSF52402">
    <property type="entry name" value="Adenine nucleotide alpha hydrolases-like"/>
    <property type="match status" value="1"/>
</dbReference>
<dbReference type="SUPFAM" id="SSF52317">
    <property type="entry name" value="Class I glutamine amidotransferase-like"/>
    <property type="match status" value="1"/>
</dbReference>
<dbReference type="SUPFAM" id="SSF54810">
    <property type="entry name" value="GMP synthetase C-terminal dimerisation domain"/>
    <property type="match status" value="1"/>
</dbReference>
<dbReference type="PROSITE" id="PS51273">
    <property type="entry name" value="GATASE_TYPE_1"/>
    <property type="match status" value="1"/>
</dbReference>
<dbReference type="PROSITE" id="PS51553">
    <property type="entry name" value="GMPS_ATP_PPASE"/>
    <property type="match status" value="1"/>
</dbReference>
<comment type="function">
    <text evidence="1">Catalyzes the synthesis of GMP from XMP.</text>
</comment>
<comment type="catalytic activity">
    <reaction evidence="1">
        <text>XMP + L-glutamine + ATP + H2O = GMP + L-glutamate + AMP + diphosphate + 2 H(+)</text>
        <dbReference type="Rhea" id="RHEA:11680"/>
        <dbReference type="ChEBI" id="CHEBI:15377"/>
        <dbReference type="ChEBI" id="CHEBI:15378"/>
        <dbReference type="ChEBI" id="CHEBI:29985"/>
        <dbReference type="ChEBI" id="CHEBI:30616"/>
        <dbReference type="ChEBI" id="CHEBI:33019"/>
        <dbReference type="ChEBI" id="CHEBI:57464"/>
        <dbReference type="ChEBI" id="CHEBI:58115"/>
        <dbReference type="ChEBI" id="CHEBI:58359"/>
        <dbReference type="ChEBI" id="CHEBI:456215"/>
        <dbReference type="EC" id="6.3.5.2"/>
    </reaction>
</comment>
<comment type="pathway">
    <text evidence="1">Purine metabolism; GMP biosynthesis; GMP from XMP (L-Gln route): step 1/1.</text>
</comment>
<comment type="subunit">
    <text evidence="1">Homodimer.</text>
</comment>
<keyword id="KW-0067">ATP-binding</keyword>
<keyword id="KW-0315">Glutamine amidotransferase</keyword>
<keyword id="KW-0332">GMP biosynthesis</keyword>
<keyword id="KW-0436">Ligase</keyword>
<keyword id="KW-0547">Nucleotide-binding</keyword>
<keyword id="KW-0658">Purine biosynthesis</keyword>
<reference key="1">
    <citation type="journal article" date="2014" name="Stand. Genomic Sci.">
        <title>Complete genome sequence of Anabaena variabilis ATCC 29413.</title>
        <authorList>
            <person name="Thiel T."/>
            <person name="Pratte B.S."/>
            <person name="Zhong J."/>
            <person name="Goodwin L."/>
            <person name="Copeland A."/>
            <person name="Lucas S."/>
            <person name="Han C."/>
            <person name="Pitluck S."/>
            <person name="Land M.L."/>
            <person name="Kyrpides N.C."/>
            <person name="Woyke T."/>
        </authorList>
    </citation>
    <scope>NUCLEOTIDE SEQUENCE [LARGE SCALE GENOMIC DNA]</scope>
    <source>
        <strain>ATCC 29413 / PCC 7937</strain>
    </source>
</reference>
<accession>Q3MEA8</accession>
<sequence length="540" mass="60732">MNTAVTLLTEQAPQPIEEFGQLERQIIIILDFGSQYSELIARRIRETQVYSEVLSYRTSAEHLRQLNPKGIILSGGPSSVYSDRAPHCDPEIWNLGVPILGVCYGMQLMVNQLGGEVAKADRGEYGKASLHIDDPTDLLTNVEDGTTMWMSHGDSVTKMPPGFEVLAHTDNTPCAAVADHDKKLYGVQFHPEVVHSIGGLALIRNFVYHICECEPTWTTAAFVEEAIREVRAKVGDKRVLLALSGGVDSSTLAFLMHKAIGDQLTCVFIDQGFMRKYEPERLVKLFQEQFHIPVEYVNARDRFLDIMVGVTDPEEKRRRIGHEFIQVFEETSRNLGPFDYLAQGTLYPDVIESADTNVDPQTGERVAVKIKSHHNVGGLPKDLRFKLVEPLRKLFKDEVRKVGRSVGLPEEIVQRQPFPGPGLAIRILGEVTADRLNILRDADLIVRQEINQRGLYNEYWQAFAVLLPIRSVGVMGDQRTYAYPIVLRIVKSEDGMTADWARVPYDVLEAISNRIVNEVKGVNRVVFDITSKPPGTIEWE</sequence>
<organism>
    <name type="scientific">Trichormus variabilis (strain ATCC 29413 / PCC 7937)</name>
    <name type="common">Anabaena variabilis</name>
    <dbReference type="NCBI Taxonomy" id="240292"/>
    <lineage>
        <taxon>Bacteria</taxon>
        <taxon>Bacillati</taxon>
        <taxon>Cyanobacteriota</taxon>
        <taxon>Cyanophyceae</taxon>
        <taxon>Nostocales</taxon>
        <taxon>Nostocaceae</taxon>
        <taxon>Trichormus</taxon>
    </lineage>
</organism>
<gene>
    <name evidence="1" type="primary">guaA</name>
    <name type="ordered locus">Ava_1054</name>
</gene>
<proteinExistence type="inferred from homology"/>
<evidence type="ECO:0000255" key="1">
    <source>
        <dbReference type="HAMAP-Rule" id="MF_00344"/>
    </source>
</evidence>
<name>GUAA_TRIV2</name>
<protein>
    <recommendedName>
        <fullName evidence="1">GMP synthase [glutamine-hydrolyzing]</fullName>
        <ecNumber evidence="1">6.3.5.2</ecNumber>
    </recommendedName>
    <alternativeName>
        <fullName evidence="1">GMP synthetase</fullName>
    </alternativeName>
    <alternativeName>
        <fullName evidence="1">Glutamine amidotransferase</fullName>
    </alternativeName>
</protein>
<feature type="chain" id="PRO_0000229397" description="GMP synthase [glutamine-hydrolyzing]">
    <location>
        <begin position="1"/>
        <end position="540"/>
    </location>
</feature>
<feature type="domain" description="Glutamine amidotransferase type-1" evidence="1">
    <location>
        <begin position="26"/>
        <end position="216"/>
    </location>
</feature>
<feature type="domain" description="GMPS ATP-PPase" evidence="1">
    <location>
        <begin position="217"/>
        <end position="415"/>
    </location>
</feature>
<feature type="active site" description="Nucleophile" evidence="1">
    <location>
        <position position="103"/>
    </location>
</feature>
<feature type="active site" evidence="1">
    <location>
        <position position="190"/>
    </location>
</feature>
<feature type="active site" evidence="1">
    <location>
        <position position="192"/>
    </location>
</feature>
<feature type="binding site" evidence="1">
    <location>
        <begin position="244"/>
        <end position="250"/>
    </location>
    <ligand>
        <name>ATP</name>
        <dbReference type="ChEBI" id="CHEBI:30616"/>
    </ligand>
</feature>